<proteinExistence type="evidence at transcript level"/>
<reference evidence="4" key="1">
    <citation type="journal article" date="2003" name="DNA Res.">
        <title>Prediction of the coding sequences of mouse homologues of KIAA gene: II. The complete nucleotide sequences of 400 mouse KIAA-homologous cDNAs identified by screening of terminal sequences of cDNA clones randomly sampled from size-fractionated libraries.</title>
        <authorList>
            <person name="Okazaki N."/>
            <person name="Kikuno R."/>
            <person name="Ohara R."/>
            <person name="Inamoto S."/>
            <person name="Aizawa H."/>
            <person name="Yuasa S."/>
            <person name="Nakajima D."/>
            <person name="Nagase T."/>
            <person name="Ohara O."/>
            <person name="Koga H."/>
        </authorList>
    </citation>
    <scope>NUCLEOTIDE SEQUENCE [LARGE SCALE MRNA] (ISOFORM 2)</scope>
    <source>
        <tissue evidence="4">Brain</tissue>
    </source>
</reference>
<reference key="2">
    <citation type="journal article" date="2009" name="PLoS Biol.">
        <title>Lineage-specific biology revealed by a finished genome assembly of the mouse.</title>
        <authorList>
            <person name="Church D.M."/>
            <person name="Goodstadt L."/>
            <person name="Hillier L.W."/>
            <person name="Zody M.C."/>
            <person name="Goldstein S."/>
            <person name="She X."/>
            <person name="Bult C.J."/>
            <person name="Agarwala R."/>
            <person name="Cherry J.L."/>
            <person name="DiCuccio M."/>
            <person name="Hlavina W."/>
            <person name="Kapustin Y."/>
            <person name="Meric P."/>
            <person name="Maglott D."/>
            <person name="Birtle Z."/>
            <person name="Marques A.C."/>
            <person name="Graves T."/>
            <person name="Zhou S."/>
            <person name="Teague B."/>
            <person name="Potamousis K."/>
            <person name="Churas C."/>
            <person name="Place M."/>
            <person name="Herschleb J."/>
            <person name="Runnheim R."/>
            <person name="Forrest D."/>
            <person name="Amos-Landgraf J."/>
            <person name="Schwartz D.C."/>
            <person name="Cheng Z."/>
            <person name="Lindblad-Toh K."/>
            <person name="Eichler E.E."/>
            <person name="Ponting C.P."/>
        </authorList>
    </citation>
    <scope>NUCLEOTIDE SEQUENCE [LARGE SCALE GENOMIC DNA]</scope>
    <source>
        <strain>C57BL/6J</strain>
    </source>
</reference>
<keyword id="KW-0025">Alternative splicing</keyword>
<keyword id="KW-0458">Lysosome</keyword>
<keyword id="KW-0472">Membrane</keyword>
<keyword id="KW-1185">Reference proteome</keyword>
<keyword id="KW-0677">Repeat</keyword>
<organism>
    <name type="scientific">Mus musculus</name>
    <name type="common">Mouse</name>
    <dbReference type="NCBI Taxonomy" id="10090"/>
    <lineage>
        <taxon>Eukaryota</taxon>
        <taxon>Metazoa</taxon>
        <taxon>Chordata</taxon>
        <taxon>Craniata</taxon>
        <taxon>Vertebrata</taxon>
        <taxon>Euteleostomi</taxon>
        <taxon>Mammalia</taxon>
        <taxon>Eutheria</taxon>
        <taxon>Euarchontoglires</taxon>
        <taxon>Glires</taxon>
        <taxon>Rodentia</taxon>
        <taxon>Myomorpha</taxon>
        <taxon>Muroidea</taxon>
        <taxon>Muridae</taxon>
        <taxon>Murinae</taxon>
        <taxon>Mus</taxon>
        <taxon>Mus</taxon>
    </lineage>
</organism>
<comment type="function">
    <text evidence="1">Lysosome fission factor. Recruited to lysosomes by RAB7 (RAB7A or RAB7B) at scission sites and homooligomerizes to mediate the constriction and scission of lysosomal tubules. May sever membranes by inserting amphipathic helices into one bilayer leaflet. Lysosome fission is required to maintain their steady-state number, shape, size, composition and function, and to accomplish regeneration.</text>
</comment>
<comment type="subunit">
    <text evidence="1">Homooligomer; homooligomerizes at lysosome scission sites.</text>
</comment>
<comment type="subcellular location">
    <subcellularLocation>
        <location evidence="1">Lysosome membrane</location>
    </subcellularLocation>
    <text evidence="1">Recruited to the lysosome membrane by RAB7 (RAB7A or RAB7B).</text>
</comment>
<comment type="alternative products">
    <event type="alternative splicing"/>
    <isoform>
        <id>E0CZ22-1</id>
        <name>1</name>
        <sequence type="displayed"/>
    </isoform>
    <isoform>
        <id>E0CZ22-2</id>
        <name>2</name>
        <sequence type="described" ref="VSP_062542 VSP_062543 VSP_062544"/>
    </isoform>
</comment>
<comment type="similarity">
    <text evidence="3">Belongs to the MROH1 family.</text>
</comment>
<comment type="sequence caution" evidence="3">
    <conflict type="erroneous initiation">
        <sequence resource="EMBL-CDS" id="BAC65844"/>
    </conflict>
    <text>Extended N-terminus.</text>
</comment>
<dbReference type="EMBL" id="AK122562">
    <property type="protein sequence ID" value="BAC65844.1"/>
    <property type="status" value="ALT_INIT"/>
    <property type="molecule type" value="mRNA"/>
</dbReference>
<dbReference type="EMBL" id="AC155074">
    <property type="status" value="NOT_ANNOTATED_CDS"/>
    <property type="molecule type" value="Genomic_DNA"/>
</dbReference>
<dbReference type="EMBL" id="AC157566">
    <property type="status" value="NOT_ANNOTATED_CDS"/>
    <property type="molecule type" value="Genomic_DNA"/>
</dbReference>
<dbReference type="RefSeq" id="NP_780666.3">
    <property type="nucleotide sequence ID" value="NM_175457.4"/>
</dbReference>
<dbReference type="SMR" id="E0CZ22"/>
<dbReference type="FunCoup" id="E0CZ22">
    <property type="interactions" value="1637"/>
</dbReference>
<dbReference type="IntAct" id="Q80T84">
    <property type="interactions" value="1"/>
</dbReference>
<dbReference type="STRING" id="10090.ENSMUSP00000094115"/>
<dbReference type="iPTMnet" id="E0CZ22"/>
<dbReference type="PhosphoSitePlus" id="E0CZ22"/>
<dbReference type="SwissPalm" id="E0CZ22"/>
<dbReference type="PaxDb" id="10090-ENSMUSP00000094115"/>
<dbReference type="PeptideAtlas" id="E0CZ22"/>
<dbReference type="ProteomicsDB" id="363191"/>
<dbReference type="Antibodypedia" id="48391">
    <property type="antibodies" value="17 antibodies from 8 providers"/>
</dbReference>
<dbReference type="Ensembl" id="ENSMUST00000096385.11">
    <property type="protein sequence ID" value="ENSMUSP00000094115.5"/>
    <property type="gene ID" value="ENSMUSG00000022558.17"/>
</dbReference>
<dbReference type="GeneID" id="223658"/>
<dbReference type="KEGG" id="mmu:223658"/>
<dbReference type="UCSC" id="uc007wkc.2">
    <property type="organism name" value="mouse"/>
</dbReference>
<dbReference type="AGR" id="MGI:2442558"/>
<dbReference type="CTD" id="727957"/>
<dbReference type="MGI" id="MGI:2442558">
    <property type="gene designation" value="Mroh1"/>
</dbReference>
<dbReference type="VEuPathDB" id="HostDB:ENSMUSG00000022558"/>
<dbReference type="eggNOG" id="KOG2032">
    <property type="taxonomic scope" value="Eukaryota"/>
</dbReference>
<dbReference type="GeneTree" id="ENSGT00940000156930"/>
<dbReference type="HOGENOM" id="CLU_003168_0_1_1"/>
<dbReference type="InParanoid" id="E0CZ22"/>
<dbReference type="OMA" id="EVYIKAM"/>
<dbReference type="OrthoDB" id="1884734at2759"/>
<dbReference type="PhylomeDB" id="E0CZ22"/>
<dbReference type="TreeFam" id="TF315201"/>
<dbReference type="BioGRID-ORCS" id="223658">
    <property type="hits" value="9 hits in 77 CRISPR screens"/>
</dbReference>
<dbReference type="ChiTaRS" id="Mroh1">
    <property type="organism name" value="mouse"/>
</dbReference>
<dbReference type="Proteomes" id="UP000000589">
    <property type="component" value="Chromosome 15"/>
</dbReference>
<dbReference type="RNAct" id="E0CZ22">
    <property type="molecule type" value="protein"/>
</dbReference>
<dbReference type="Bgee" id="ENSMUSG00000022558">
    <property type="expression patterns" value="Expressed in yolk sac and 240 other cell types or tissues"/>
</dbReference>
<dbReference type="ExpressionAtlas" id="E0CZ22">
    <property type="expression patterns" value="baseline and differential"/>
</dbReference>
<dbReference type="GO" id="GO:0005765">
    <property type="term" value="C:lysosomal membrane"/>
    <property type="evidence" value="ECO:0000250"/>
    <property type="project" value="UniProtKB"/>
</dbReference>
<dbReference type="GO" id="GO:0140912">
    <property type="term" value="F:membrane destabilizing activity"/>
    <property type="evidence" value="ECO:0000250"/>
    <property type="project" value="UniProtKB"/>
</dbReference>
<dbReference type="GO" id="GO:0170064">
    <property type="term" value="P:lysosome fission"/>
    <property type="evidence" value="ECO:0000250"/>
    <property type="project" value="UniProtKB"/>
</dbReference>
<dbReference type="Gene3D" id="1.25.10.10">
    <property type="entry name" value="Leucine-rich Repeat Variant"/>
    <property type="match status" value="2"/>
</dbReference>
<dbReference type="InterPro" id="IPR011989">
    <property type="entry name" value="ARM-like"/>
</dbReference>
<dbReference type="InterPro" id="IPR016024">
    <property type="entry name" value="ARM-type_fold"/>
</dbReference>
<dbReference type="InterPro" id="IPR055406">
    <property type="entry name" value="HEAT_Maestro"/>
</dbReference>
<dbReference type="InterPro" id="IPR055408">
    <property type="entry name" value="HEAT_MROH2B-like"/>
</dbReference>
<dbReference type="InterPro" id="IPR021133">
    <property type="entry name" value="HEAT_type_2"/>
</dbReference>
<dbReference type="InterPro" id="IPR048465">
    <property type="entry name" value="Maestro-like_HEAT"/>
</dbReference>
<dbReference type="InterPro" id="IPR045206">
    <property type="entry name" value="Maestro_heat-like_prot"/>
</dbReference>
<dbReference type="InterPro" id="IPR056282">
    <property type="entry name" value="MROH2B-like_N_HEAT"/>
</dbReference>
<dbReference type="PANTHER" id="PTHR23120:SF44">
    <property type="entry name" value="MAESTRO HEAT-LIKE REPEAT-CONTAINING PROTEIN FAMILY MEMBER 1"/>
    <property type="match status" value="1"/>
</dbReference>
<dbReference type="PANTHER" id="PTHR23120">
    <property type="entry name" value="MAESTRO-RELATED HEAT DOMAIN-CONTAINING"/>
    <property type="match status" value="1"/>
</dbReference>
<dbReference type="Pfam" id="PF21047">
    <property type="entry name" value="HEAT_Maestro"/>
    <property type="match status" value="1"/>
</dbReference>
<dbReference type="Pfam" id="PF23210">
    <property type="entry name" value="HEAT_Maestro_2"/>
    <property type="match status" value="1"/>
</dbReference>
<dbReference type="Pfam" id="PF23221">
    <property type="entry name" value="HEAT_MROH2B_1st"/>
    <property type="match status" value="1"/>
</dbReference>
<dbReference type="Pfam" id="PF23227">
    <property type="entry name" value="HEAT_MROH2B_C"/>
    <property type="match status" value="1"/>
</dbReference>
<dbReference type="SUPFAM" id="SSF48371">
    <property type="entry name" value="ARM repeat"/>
    <property type="match status" value="2"/>
</dbReference>
<dbReference type="PROSITE" id="PS50077">
    <property type="entry name" value="HEAT_REPEAT"/>
    <property type="match status" value="1"/>
</dbReference>
<sequence length="1640" mass="181795">MTRPYIKRLSFTLLDSITDKDPMVQEQVCSALCSLGDAQPDETLHACEEYLRQHDKLAHPYRTKILRAMETVLSSHIHDLDKDTAGAVILLATSEMTRTKELDCDWQQAAGSVLVAVGKRFTNQVMEEVLSRFQPGMLPHSSVLHTLANLSVSNAFDMVPFLPSILSTMLPMLSMAKQDALKVVFCGALQHFSESILEYLANLDQAPDPTVRKDTFGADIFGAYDVLFHHWLQSRDAKLRLAVVAALGPMSHLLPSERLEEQLPKLLPAVLGLYKKHAEAFQISKSLGQILEAAVNVSSRTLEVQLDALLVALHAQICVPVESSSPLVMNSQKEVLRCFTVLACCSPDRLLAFLLPRLDTSNERLRVGTLQILRHIINSAAAQMEAKQPFILSSMRLPLLDTNDKVKRAVVQVISAMAHHGYLEQPGGEVMVEYIVQQCALPAEEPEKPGPDGEDLAADSVRAVSIRTLYLVSTTVDRMNSVLWPYLLEFLTPVRFTAALTPLCRSLVHLALKRQEAGADDFLIQYNANANLPSPFAMTTRLLVVSSNPYLGDGRGAASLRLLKVMHQNIHPFLGQRWETTMPMLLEYLDEHTEESLSLKEWEEKLLMFLRDTLAVVSDNIWICQLSQEMCKQLPSYSGTPQEKNFLYKCIGTTLGAASSKEVVRKHLRELLETARYQEEAEQEGLACCFGICAITHLEDTLAQLEDFVRSDVFRKSTGIFSIFKDRSEHEVERMKSCLILCYGHVAAQAPRELVLARVESDILRSMFQCFNTKVLGIKVETKDPALKLCLVQSLCMVSQAMCSSAQASSFHFLRKTELVTQMMEFIRAEPPDCLRTPIRKKAMLACTYLVNLEPALEEQTQADVVHSCLHSVMALPPEAEGGDGVGREPLYLDTVCALEDLLTRLLRQNMTPQGLQIMVEHLSPWIKSPRGHERARALGLGACLLEFFQEHLLVSTLVPFHNLGLLVGLFAPRCADTWTTTRQKAVGCVYSLLYLQLGYEGFSRDHRDDVAERLLTLQDGLVNADPTILFHTCHSIAQVIAKRLPSDQLISLLLTVFESLGDPDKNCSRAATVMINCLLKERGNVLLEKVPEIVSVLRAKLRDTQEEHVLPAAQHSVYLLASQHCEAVVSSLLGSPLPFDSHTCALWRALAVEPGLTAQVLELLLEKMSKDVPFKESRAFLLGSTADRVATLLPLAATCALYEVLSAPSSGTVVLELYPQLFAALLLRVSCTVGVQLPRNLQAKERRSTSPARAARNLDPCSSAVDALQALLLRSGSQDMLRCVELERGWELLKTSAGHEDGVAQLASSMAKYAGPRLPPVTKALACTQNSVYEIQRVTSTAFLAELLSSNVVNDLMLLEPLLDNLTARLKDSSASVRRLVLRGLANMASGSPDKVRAHGPQLLTAMVSGLDDGDEPHSPVALEAMVGLSRLLDLVEPWDLRLVLLHTTIRIRPFFDSEKVEFRTASIRLFGHLNKACHGDCEDVFLEQVVGGLVPLLLHLRDPQVPVASACKFALCMCVPHLECAELAAAFYKYLQEGRSVHFGEFLNSTCKHLMHHFPDLLGRLVSTNLFYFKSSWDDVRAAAPMFTGFLVLHAEPEQKTQVDLEQLIVALQLLLKDPVPGVREKAAETLGRLVKFA</sequence>
<evidence type="ECO:0000250" key="1">
    <source>
        <dbReference type="UniProtKB" id="Q8NDA8"/>
    </source>
</evidence>
<evidence type="ECO:0000255" key="2"/>
<evidence type="ECO:0000305" key="3"/>
<evidence type="ECO:0000312" key="4">
    <source>
        <dbReference type="EMBL" id="BAC65844.1"/>
    </source>
</evidence>
<evidence type="ECO:0000312" key="5">
    <source>
        <dbReference type="MGI" id="MGI:2442558"/>
    </source>
</evidence>
<feature type="chain" id="PRO_0000462262" description="Maestro heat-like repeat-containing protein family member 1">
    <location>
        <begin position="1"/>
        <end position="1640"/>
    </location>
</feature>
<feature type="repeat" description="HEAT 2" evidence="2">
    <location>
        <begin position="3"/>
        <end position="41"/>
    </location>
</feature>
<feature type="repeat" description="HEAT 3" evidence="2">
    <location>
        <begin position="218"/>
        <end position="256"/>
    </location>
</feature>
<feature type="repeat" description="HEAT 4" evidence="2">
    <location>
        <begin position="344"/>
        <end position="382"/>
    </location>
</feature>
<feature type="repeat" description="HEAT 5" evidence="2">
    <location>
        <begin position="385"/>
        <end position="423"/>
    </location>
</feature>
<feature type="repeat" description="HEAT 6" evidence="2">
    <location>
        <begin position="575"/>
        <end position="616"/>
    </location>
</feature>
<feature type="repeat" description="HEAT 7" evidence="2">
    <location>
        <begin position="1357"/>
        <end position="1395"/>
    </location>
</feature>
<feature type="repeat" description="HEAT 8" evidence="2">
    <location>
        <begin position="1398"/>
        <end position="1436"/>
    </location>
</feature>
<feature type="repeat" description="HEAT 9" evidence="2">
    <location>
        <begin position="1604"/>
        <end position="1640"/>
    </location>
</feature>
<feature type="splice variant" id="VSP_062542" description="In isoform 2.">
    <location>
        <begin position="774"/>
        <end position="782"/>
    </location>
</feature>
<feature type="splice variant" id="VSP_062543" description="In isoform 2.">
    <original>EIVSVLRAKLR</original>
    <variation>GDCQPWDLRLL</variation>
    <location>
        <begin position="1093"/>
        <end position="1103"/>
    </location>
</feature>
<feature type="splice variant" id="VSP_062544" description="In isoform 2.">
    <location>
        <begin position="1104"/>
        <end position="1640"/>
    </location>
</feature>
<feature type="sequence conflict" description="In Ref. 1; BAC65844." evidence="3" ref="1">
    <original>L</original>
    <variation>P</variation>
    <location>
        <position position="66"/>
    </location>
</feature>
<feature type="sequence conflict" description="In Ref. 1; BAC65844." evidence="3" ref="1">
    <original>V</original>
    <variation>L</variation>
    <location>
        <position position="184"/>
    </location>
</feature>
<protein>
    <recommendedName>
        <fullName>Maestro heat-like repeat-containing protein family member 1</fullName>
    </recommendedName>
</protein>
<name>MROH1_MOUSE</name>
<accession>E0CZ22</accession>
<accession>D3Z624</accession>
<accession>E0CYC5</accession>
<accession>Q80T84</accession>
<gene>
    <name evidence="5" type="primary">Mroh1</name>
    <name type="synonym">Kiaa1833</name>
</gene>